<protein>
    <recommendedName>
        <fullName>Phenylalanine ammonia-lyase 1</fullName>
        <ecNumber evidence="2">4.3.1.24</ecNumber>
    </recommendedName>
</protein>
<sequence length="708" mass="76845">MDCENKNVVLGNGLCMQKDPLNWGMAAEALTGSHLDEVKRMVAEFRKPMVQLGGETLTVSQVAAIAAGSVKVELAESARAGVKASSDWVMESMNKGTDSYGVTTGFGATSHRRTKQGGALQKELIRFLNAGIFGSGNDSSNILPHSATRAAMLVRINTLLQGYSGIRFEILEAITKFLNQNITPCLPLRGTITASGDLVPLSYIAGLLTGRPNSKAVGPTGENLTAAEAFKLAGVDGGFFELQPKEGLALVNGTAVGSGMASMVLFETNILAVLAEVMSAIFAEVMQGKPEFTDHLTHKLKHHPGQIEAAAIMEHILDGSSYVKAAEKQHEMDPLQKPKQDRYALRTSPQWLGPQIEVIRSSTKMIEREINSVNDNPLIDVSRNKAIHGGNFQGTPIGVSMDNTRLAIAAIGKLMFAQFSELVNDFYNNGLPSNLSGGRNPSLDYGFKGAEIAMASYCSELQFLGNPVTNHVQSAEQHNQDVNSLGLISSRKTAEAVEILKLMSTTFLVGLCQAVDLRHLEENLKSTVKNTVSQVAKKVLTMGVNGELHPSRFCELDLLRVVDREYIFAYIDDPCSATYPLMQKLRQVLVEHALKNGETEKNLSTSIFQKIAAFEDELKALLPKEVESARAVVESGNPAIPNRIKECRSYPLYKFIREELGTVYLTGEKVTSPGEEFDKVFTAMSKGEIIDPLLACLESWNGAPLPIA</sequence>
<keyword id="KW-0963">Cytoplasm</keyword>
<keyword id="KW-0456">Lyase</keyword>
<keyword id="KW-0585">Phenylalanine catabolism</keyword>
<keyword id="KW-0587">Phenylpropanoid metabolism</keyword>
<accession>O23865</accession>
<feature type="chain" id="PRO_0000215390" description="Phenylalanine ammonia-lyase 1">
    <location>
        <begin position="1"/>
        <end position="708"/>
    </location>
</feature>
<feature type="active site" description="Proton donor/acceptor" evidence="3">
    <location>
        <position position="100"/>
    </location>
</feature>
<feature type="binding site" evidence="3">
    <location>
        <position position="252"/>
    </location>
    <ligand>
        <name>(E)-cinnamate</name>
        <dbReference type="ChEBI" id="CHEBI:15669"/>
    </ligand>
</feature>
<feature type="binding site" evidence="3">
    <location>
        <position position="340"/>
    </location>
    <ligand>
        <name>(E)-cinnamate</name>
        <dbReference type="ChEBI" id="CHEBI:15669"/>
    </ligand>
</feature>
<feature type="binding site" evidence="3">
    <location>
        <position position="346"/>
    </location>
    <ligand>
        <name>(E)-cinnamate</name>
        <dbReference type="ChEBI" id="CHEBI:15669"/>
    </ligand>
</feature>
<feature type="binding site" evidence="3">
    <location>
        <position position="376"/>
    </location>
    <ligand>
        <name>(E)-cinnamate</name>
        <dbReference type="ChEBI" id="CHEBI:15669"/>
    </ligand>
</feature>
<feature type="binding site" evidence="1">
    <location>
        <position position="448"/>
    </location>
    <ligand>
        <name>(E)-cinnamate</name>
        <dbReference type="ChEBI" id="CHEBI:15669"/>
    </ligand>
</feature>
<feature type="binding site" evidence="1">
    <location>
        <position position="476"/>
    </location>
    <ligand>
        <name>(E)-cinnamate</name>
        <dbReference type="ChEBI" id="CHEBI:15669"/>
    </ligand>
</feature>
<feature type="binding site" evidence="3">
    <location>
        <position position="479"/>
    </location>
    <ligand>
        <name>(E)-cinnamate</name>
        <dbReference type="ChEBI" id="CHEBI:15669"/>
    </ligand>
</feature>
<feature type="modified residue" description="2,3-didehydroalanine (Ser)" evidence="4">
    <location>
        <position position="195"/>
    </location>
</feature>
<feature type="cross-link" description="5-imidazolinone (Ala-Gly)" evidence="3">
    <location>
        <begin position="194"/>
        <end position="196"/>
    </location>
</feature>
<comment type="function">
    <text evidence="2">This is a key enzyme of plant metabolism catalyzing the first reaction in the biosynthesis from L-phenylalanine of a wide variety of natural products based on the phenylpropane skeleton.</text>
</comment>
<comment type="catalytic activity">
    <reaction evidence="2">
        <text>L-phenylalanine = (E)-cinnamate + NH4(+)</text>
        <dbReference type="Rhea" id="RHEA:21384"/>
        <dbReference type="ChEBI" id="CHEBI:15669"/>
        <dbReference type="ChEBI" id="CHEBI:28938"/>
        <dbReference type="ChEBI" id="CHEBI:58095"/>
        <dbReference type="EC" id="4.3.1.24"/>
    </reaction>
</comment>
<comment type="pathway">
    <text evidence="5">Phenylpropanoid metabolism; trans-cinnamate biosynthesis; trans-cinnamate from L-phenylalanine: step 1/1.</text>
</comment>
<comment type="subunit">
    <text evidence="2">Homotetramer.</text>
</comment>
<comment type="subcellular location">
    <subcellularLocation>
        <location evidence="5">Cytoplasm</location>
    </subcellularLocation>
</comment>
<comment type="PTM">
    <text evidence="3">Contains an active site 4-methylidene-imidazol-5-one (MIO), which is formed autocatalytically by cyclization and dehydration of residues Ala-Ser-Gly.</text>
</comment>
<comment type="similarity">
    <text evidence="5">Belongs to the PAL/histidase family.</text>
</comment>
<evidence type="ECO:0000250" key="1">
    <source>
        <dbReference type="UniProtKB" id="P11544"/>
    </source>
</evidence>
<evidence type="ECO:0000250" key="2">
    <source>
        <dbReference type="UniProtKB" id="P24481"/>
    </source>
</evidence>
<evidence type="ECO:0000250" key="3">
    <source>
        <dbReference type="UniProtKB" id="Q68G84"/>
    </source>
</evidence>
<evidence type="ECO:0000255" key="4">
    <source>
        <dbReference type="PROSITE-ProRule" id="PRU10122"/>
    </source>
</evidence>
<evidence type="ECO:0000305" key="5"/>
<gene>
    <name type="primary">PAL1</name>
</gene>
<name>PAL1_DAUCA</name>
<dbReference type="EC" id="4.3.1.24" evidence="2"/>
<dbReference type="EMBL" id="D85850">
    <property type="protein sequence ID" value="BAA23367.1"/>
    <property type="molecule type" value="Genomic_DNA"/>
</dbReference>
<dbReference type="PIR" id="T14295">
    <property type="entry name" value="T14295"/>
</dbReference>
<dbReference type="SMR" id="O23865"/>
<dbReference type="OMA" id="RRLGSMC"/>
<dbReference type="UniPathway" id="UPA00713">
    <property type="reaction ID" value="UER00725"/>
</dbReference>
<dbReference type="GO" id="GO:0005737">
    <property type="term" value="C:cytoplasm"/>
    <property type="evidence" value="ECO:0007669"/>
    <property type="project" value="UniProtKB-SubCell"/>
</dbReference>
<dbReference type="GO" id="GO:0045548">
    <property type="term" value="F:phenylalanine ammonia-lyase activity"/>
    <property type="evidence" value="ECO:0007669"/>
    <property type="project" value="UniProtKB-EC"/>
</dbReference>
<dbReference type="GO" id="GO:0009800">
    <property type="term" value="P:cinnamic acid biosynthetic process"/>
    <property type="evidence" value="ECO:0007669"/>
    <property type="project" value="UniProtKB-UniPathway"/>
</dbReference>
<dbReference type="GO" id="GO:0006559">
    <property type="term" value="P:L-phenylalanine catabolic process"/>
    <property type="evidence" value="ECO:0007669"/>
    <property type="project" value="UniProtKB-KW"/>
</dbReference>
<dbReference type="CDD" id="cd00332">
    <property type="entry name" value="PAL-HAL"/>
    <property type="match status" value="1"/>
</dbReference>
<dbReference type="FunFam" id="1.10.274.20:FF:000001">
    <property type="entry name" value="Phenylalanine ammonia-lyase"/>
    <property type="match status" value="1"/>
</dbReference>
<dbReference type="FunFam" id="1.10.275.10:FF:000009">
    <property type="entry name" value="Phenylalanine ammonia-lyase"/>
    <property type="match status" value="1"/>
</dbReference>
<dbReference type="FunFam" id="1.20.200.10:FF:000009">
    <property type="entry name" value="Phenylalanine ammonia-lyase"/>
    <property type="match status" value="1"/>
</dbReference>
<dbReference type="Gene3D" id="1.20.200.10">
    <property type="entry name" value="Fumarase/aspartase (Central domain)"/>
    <property type="match status" value="1"/>
</dbReference>
<dbReference type="Gene3D" id="1.10.275.10">
    <property type="entry name" value="Fumarase/aspartase (N-terminal domain)"/>
    <property type="match status" value="1"/>
</dbReference>
<dbReference type="Gene3D" id="1.10.274.20">
    <property type="entry name" value="Phenylalanine ammonia-lyase 1, domain 3"/>
    <property type="match status" value="1"/>
</dbReference>
<dbReference type="InterPro" id="IPR001106">
    <property type="entry name" value="Aromatic_Lyase"/>
</dbReference>
<dbReference type="InterPro" id="IPR024083">
    <property type="entry name" value="Fumarase/histidase_N"/>
</dbReference>
<dbReference type="InterPro" id="IPR008948">
    <property type="entry name" value="L-Aspartase-like"/>
</dbReference>
<dbReference type="InterPro" id="IPR022313">
    <property type="entry name" value="Phe/His_NH3-lyase_AS"/>
</dbReference>
<dbReference type="InterPro" id="IPR005922">
    <property type="entry name" value="Phe_NH3-lyase"/>
</dbReference>
<dbReference type="InterPro" id="IPR023144">
    <property type="entry name" value="Phe_NH3-lyase_shielding_dom_sf"/>
</dbReference>
<dbReference type="NCBIfam" id="TIGR01226">
    <property type="entry name" value="phe_am_lyase"/>
    <property type="match status" value="1"/>
</dbReference>
<dbReference type="PANTHER" id="PTHR10362">
    <property type="entry name" value="HISTIDINE AMMONIA-LYASE"/>
    <property type="match status" value="1"/>
</dbReference>
<dbReference type="Pfam" id="PF00221">
    <property type="entry name" value="Lyase_aromatic"/>
    <property type="match status" value="1"/>
</dbReference>
<dbReference type="SUPFAM" id="SSF48557">
    <property type="entry name" value="L-aspartase-like"/>
    <property type="match status" value="1"/>
</dbReference>
<dbReference type="PROSITE" id="PS00488">
    <property type="entry name" value="PAL_HISTIDASE"/>
    <property type="match status" value="1"/>
</dbReference>
<proteinExistence type="inferred from homology"/>
<organism>
    <name type="scientific">Daucus carota</name>
    <name type="common">Wild carrot</name>
    <dbReference type="NCBI Taxonomy" id="4039"/>
    <lineage>
        <taxon>Eukaryota</taxon>
        <taxon>Viridiplantae</taxon>
        <taxon>Streptophyta</taxon>
        <taxon>Embryophyta</taxon>
        <taxon>Tracheophyta</taxon>
        <taxon>Spermatophyta</taxon>
        <taxon>Magnoliopsida</taxon>
        <taxon>eudicotyledons</taxon>
        <taxon>Gunneridae</taxon>
        <taxon>Pentapetalae</taxon>
        <taxon>asterids</taxon>
        <taxon>campanulids</taxon>
        <taxon>Apiales</taxon>
        <taxon>Apiaceae</taxon>
        <taxon>Apioideae</taxon>
        <taxon>Scandiceae</taxon>
        <taxon>Daucinae</taxon>
        <taxon>Daucus</taxon>
        <taxon>Daucus sect. Daucus</taxon>
    </lineage>
</organism>
<reference key="1">
    <citation type="journal article" date="1997" name="Photochem. Photobiol.">
        <title>Action spectrum for induction of promoter activity of phenylalanine ammonia-lyase gene by UV in carrot suspension cells.</title>
        <authorList>
            <person name="Takeda J."/>
            <person name="Ozeki Y."/>
            <person name="Yoshida K."/>
        </authorList>
    </citation>
    <scope>NUCLEOTIDE SEQUENCE [GENOMIC DNA]</scope>
    <source>
        <strain>cv. Kurodagosun</strain>
    </source>
</reference>